<name>HTRA1_XENTR</name>
<evidence type="ECO:0000250" key="1"/>
<evidence type="ECO:0000250" key="2">
    <source>
        <dbReference type="UniProtKB" id="Q92743"/>
    </source>
</evidence>
<evidence type="ECO:0000255" key="3"/>
<evidence type="ECO:0000255" key="4">
    <source>
        <dbReference type="PROSITE-ProRule" id="PRU00143"/>
    </source>
</evidence>
<evidence type="ECO:0000255" key="5">
    <source>
        <dbReference type="PROSITE-ProRule" id="PRU00653"/>
    </source>
</evidence>
<evidence type="ECO:0000255" key="6">
    <source>
        <dbReference type="PROSITE-ProRule" id="PRU00798"/>
    </source>
</evidence>
<evidence type="ECO:0000305" key="7"/>
<accession>A4IHA1</accession>
<accession>A0JM19</accession>
<keyword id="KW-1003">Cell membrane</keyword>
<keyword id="KW-0963">Cytoplasm</keyword>
<keyword id="KW-1015">Disulfide bond</keyword>
<keyword id="KW-0340">Growth factor binding</keyword>
<keyword id="KW-0378">Hydrolase</keyword>
<keyword id="KW-0472">Membrane</keyword>
<keyword id="KW-0645">Protease</keyword>
<keyword id="KW-1185">Reference proteome</keyword>
<keyword id="KW-0964">Secreted</keyword>
<keyword id="KW-0720">Serine protease</keyword>
<keyword id="KW-0732">Signal</keyword>
<protein>
    <recommendedName>
        <fullName>Serine protease HTRA1</fullName>
        <ecNumber>3.4.21.-</ecNumber>
    </recommendedName>
    <alternativeName>
        <fullName>High-temperature requirement A serine peptidase 1</fullName>
    </alternativeName>
    <alternativeName>
        <fullName>Serine protease 11</fullName>
    </alternativeName>
</protein>
<organism>
    <name type="scientific">Xenopus tropicalis</name>
    <name type="common">Western clawed frog</name>
    <name type="synonym">Silurana tropicalis</name>
    <dbReference type="NCBI Taxonomy" id="8364"/>
    <lineage>
        <taxon>Eukaryota</taxon>
        <taxon>Metazoa</taxon>
        <taxon>Chordata</taxon>
        <taxon>Craniata</taxon>
        <taxon>Vertebrata</taxon>
        <taxon>Euteleostomi</taxon>
        <taxon>Amphibia</taxon>
        <taxon>Batrachia</taxon>
        <taxon>Anura</taxon>
        <taxon>Pipoidea</taxon>
        <taxon>Pipidae</taxon>
        <taxon>Xenopodinae</taxon>
        <taxon>Xenopus</taxon>
        <taxon>Silurana</taxon>
    </lineage>
</organism>
<dbReference type="EC" id="3.4.21.-"/>
<dbReference type="EMBL" id="AAMC01093882">
    <property type="status" value="NOT_ANNOTATED_CDS"/>
    <property type="molecule type" value="Genomic_DNA"/>
</dbReference>
<dbReference type="EMBL" id="AAMC01093885">
    <property type="status" value="NOT_ANNOTATED_CDS"/>
    <property type="molecule type" value="Genomic_DNA"/>
</dbReference>
<dbReference type="EMBL" id="BC125705">
    <property type="protein sequence ID" value="AAI25706.1"/>
    <property type="status" value="ALT_INIT"/>
    <property type="molecule type" value="mRNA"/>
</dbReference>
<dbReference type="EMBL" id="BC135434">
    <property type="protein sequence ID" value="AAI35435.1"/>
    <property type="status" value="ALT_INIT"/>
    <property type="molecule type" value="mRNA"/>
</dbReference>
<dbReference type="RefSeq" id="NP_001072730.2">
    <property type="nucleotide sequence ID" value="NM_001079262.2"/>
</dbReference>
<dbReference type="SMR" id="A4IHA1"/>
<dbReference type="STRING" id="8364.ENSXETP00000008880"/>
<dbReference type="MEROPS" id="S01.277"/>
<dbReference type="PaxDb" id="8364-ENSXETP00000033992"/>
<dbReference type="DNASU" id="780187"/>
<dbReference type="GeneID" id="780187"/>
<dbReference type="KEGG" id="xtr:780187"/>
<dbReference type="AGR" id="Xenbase:XB-GENE-487699"/>
<dbReference type="CTD" id="5654"/>
<dbReference type="Xenbase" id="XB-GENE-487699">
    <property type="gene designation" value="htra1"/>
</dbReference>
<dbReference type="eggNOG" id="KOG1320">
    <property type="taxonomic scope" value="Eukaryota"/>
</dbReference>
<dbReference type="HOGENOM" id="CLU_020120_6_2_1"/>
<dbReference type="InParanoid" id="A4IHA1"/>
<dbReference type="OMA" id="PAECAGS"/>
<dbReference type="OrthoDB" id="4217619at2759"/>
<dbReference type="Proteomes" id="UP000008143">
    <property type="component" value="Chromosome 7"/>
</dbReference>
<dbReference type="Bgee" id="ENSXETG00000015580">
    <property type="expression patterns" value="Expressed in skeletal muscle tissue and 9 other cell types or tissues"/>
</dbReference>
<dbReference type="GO" id="GO:0005829">
    <property type="term" value="C:cytosol"/>
    <property type="evidence" value="ECO:0007669"/>
    <property type="project" value="UniProtKB-SubCell"/>
</dbReference>
<dbReference type="GO" id="GO:0005576">
    <property type="term" value="C:extracellular region"/>
    <property type="evidence" value="ECO:0007669"/>
    <property type="project" value="UniProtKB-SubCell"/>
</dbReference>
<dbReference type="GO" id="GO:0005886">
    <property type="term" value="C:plasma membrane"/>
    <property type="evidence" value="ECO:0007669"/>
    <property type="project" value="UniProtKB-SubCell"/>
</dbReference>
<dbReference type="GO" id="GO:0019838">
    <property type="term" value="F:growth factor binding"/>
    <property type="evidence" value="ECO:0007669"/>
    <property type="project" value="UniProtKB-KW"/>
</dbReference>
<dbReference type="GO" id="GO:0004252">
    <property type="term" value="F:serine-type endopeptidase activity"/>
    <property type="evidence" value="ECO:0007669"/>
    <property type="project" value="InterPro"/>
</dbReference>
<dbReference type="GO" id="GO:0006508">
    <property type="term" value="P:proteolysis"/>
    <property type="evidence" value="ECO:0007669"/>
    <property type="project" value="UniProtKB-KW"/>
</dbReference>
<dbReference type="CDD" id="cd00104">
    <property type="entry name" value="KAZAL_FS"/>
    <property type="match status" value="1"/>
</dbReference>
<dbReference type="FunFam" id="2.40.10.120:FF:000002">
    <property type="entry name" value="HtrA serine peptidase 3"/>
    <property type="match status" value="1"/>
</dbReference>
<dbReference type="Gene3D" id="2.30.42.10">
    <property type="match status" value="1"/>
</dbReference>
<dbReference type="Gene3D" id="2.40.10.120">
    <property type="match status" value="1"/>
</dbReference>
<dbReference type="Gene3D" id="3.30.60.30">
    <property type="match status" value="1"/>
</dbReference>
<dbReference type="Gene3D" id="4.10.40.20">
    <property type="match status" value="1"/>
</dbReference>
<dbReference type="InterPro" id="IPR009030">
    <property type="entry name" value="Growth_fac_rcpt_cys_sf"/>
</dbReference>
<dbReference type="InterPro" id="IPR000867">
    <property type="entry name" value="IGFBP-like"/>
</dbReference>
<dbReference type="InterPro" id="IPR002350">
    <property type="entry name" value="Kazal_dom"/>
</dbReference>
<dbReference type="InterPro" id="IPR036058">
    <property type="entry name" value="Kazal_dom_sf"/>
</dbReference>
<dbReference type="InterPro" id="IPR001478">
    <property type="entry name" value="PDZ"/>
</dbReference>
<dbReference type="InterPro" id="IPR041489">
    <property type="entry name" value="PDZ_6"/>
</dbReference>
<dbReference type="InterPro" id="IPR036034">
    <property type="entry name" value="PDZ_sf"/>
</dbReference>
<dbReference type="InterPro" id="IPR009003">
    <property type="entry name" value="Peptidase_S1_PA"/>
</dbReference>
<dbReference type="InterPro" id="IPR001940">
    <property type="entry name" value="Peptidase_S1C"/>
</dbReference>
<dbReference type="PANTHER" id="PTHR22939">
    <property type="entry name" value="SERINE PROTEASE FAMILY S1C HTRA-RELATED"/>
    <property type="match status" value="1"/>
</dbReference>
<dbReference type="PANTHER" id="PTHR22939:SF13">
    <property type="entry name" value="SERINE PROTEASE HTRA1"/>
    <property type="match status" value="1"/>
</dbReference>
<dbReference type="Pfam" id="PF00219">
    <property type="entry name" value="IGFBP"/>
    <property type="match status" value="1"/>
</dbReference>
<dbReference type="Pfam" id="PF07648">
    <property type="entry name" value="Kazal_2"/>
    <property type="match status" value="1"/>
</dbReference>
<dbReference type="Pfam" id="PF17820">
    <property type="entry name" value="PDZ_6"/>
    <property type="match status" value="1"/>
</dbReference>
<dbReference type="Pfam" id="PF13365">
    <property type="entry name" value="Trypsin_2"/>
    <property type="match status" value="1"/>
</dbReference>
<dbReference type="PRINTS" id="PR00834">
    <property type="entry name" value="PROTEASES2C"/>
</dbReference>
<dbReference type="SMART" id="SM00121">
    <property type="entry name" value="IB"/>
    <property type="match status" value="1"/>
</dbReference>
<dbReference type="SMART" id="SM00280">
    <property type="entry name" value="KAZAL"/>
    <property type="match status" value="1"/>
</dbReference>
<dbReference type="SMART" id="SM00228">
    <property type="entry name" value="PDZ"/>
    <property type="match status" value="1"/>
</dbReference>
<dbReference type="SUPFAM" id="SSF57184">
    <property type="entry name" value="Growth factor receptor domain"/>
    <property type="match status" value="1"/>
</dbReference>
<dbReference type="SUPFAM" id="SSF100895">
    <property type="entry name" value="Kazal-type serine protease inhibitors"/>
    <property type="match status" value="1"/>
</dbReference>
<dbReference type="SUPFAM" id="SSF50156">
    <property type="entry name" value="PDZ domain-like"/>
    <property type="match status" value="1"/>
</dbReference>
<dbReference type="SUPFAM" id="SSF50494">
    <property type="entry name" value="Trypsin-like serine proteases"/>
    <property type="match status" value="1"/>
</dbReference>
<dbReference type="PROSITE" id="PS51323">
    <property type="entry name" value="IGFBP_N_2"/>
    <property type="match status" value="1"/>
</dbReference>
<dbReference type="PROSITE" id="PS51465">
    <property type="entry name" value="KAZAL_2"/>
    <property type="match status" value="1"/>
</dbReference>
<dbReference type="PROSITE" id="PS50106">
    <property type="entry name" value="PDZ"/>
    <property type="match status" value="1"/>
</dbReference>
<feature type="signal peptide" evidence="3">
    <location>
        <begin position="1"/>
        <end position="18"/>
    </location>
</feature>
<feature type="chain" id="PRO_0000416255" description="Serine protease HTRA1">
    <location>
        <begin position="19"/>
        <end position="460"/>
    </location>
</feature>
<feature type="domain" description="IGFBP N-terminal" evidence="5">
    <location>
        <begin position="22"/>
        <end position="92"/>
    </location>
</feature>
<feature type="domain" description="Kazal-like" evidence="6">
    <location>
        <begin position="74"/>
        <end position="136"/>
    </location>
</feature>
<feature type="domain" description="PDZ" evidence="4">
    <location>
        <begin position="344"/>
        <end position="447"/>
    </location>
</feature>
<feature type="region of interest" description="Serine protease">
    <location>
        <begin position="183"/>
        <end position="343"/>
    </location>
</feature>
<feature type="active site" description="Charge relay system" evidence="2">
    <location>
        <position position="199"/>
    </location>
</feature>
<feature type="active site" description="Charge relay system" evidence="2">
    <location>
        <position position="229"/>
    </location>
</feature>
<feature type="active site" description="Charge relay system" evidence="2">
    <location>
        <position position="307"/>
    </location>
</feature>
<feature type="site" description="Involved in trimer stabilization" evidence="2">
    <location>
        <position position="148"/>
    </location>
</feature>
<feature type="site" description="Involved in trimer stabilization" evidence="2">
    <location>
        <position position="150"/>
    </location>
</feature>
<feature type="site" description="Involved in trimer stabilization" evidence="2">
    <location>
        <position position="257"/>
    </location>
</feature>
<feature type="disulfide bond" evidence="5">
    <location>
        <begin position="26"/>
        <end position="51"/>
    </location>
</feature>
<feature type="disulfide bond" evidence="5">
    <location>
        <begin position="30"/>
        <end position="53"/>
    </location>
</feature>
<feature type="disulfide bond" evidence="5">
    <location>
        <begin position="35"/>
        <end position="54"/>
    </location>
</feature>
<feature type="disulfide bond" evidence="5">
    <location>
        <begin position="42"/>
        <end position="57"/>
    </location>
</feature>
<feature type="disulfide bond" evidence="5">
    <location>
        <begin position="65"/>
        <end position="80"/>
    </location>
</feature>
<feature type="disulfide bond" evidence="5">
    <location>
        <begin position="74"/>
        <end position="89"/>
    </location>
</feature>
<feature type="disulfide bond" evidence="7">
    <location>
        <begin position="91"/>
        <end position="109"/>
    </location>
</feature>
<feature type="disulfide bond" evidence="6">
    <location>
        <begin position="98"/>
        <end position="134"/>
    </location>
</feature>
<feature type="sequence conflict" description="In Ref. 1; AAI35435." evidence="7" ref="1">
    <original>V</original>
    <variation>L</variation>
    <location>
        <position position="381"/>
    </location>
</feature>
<feature type="sequence conflict" description="In Ref. 1; AAI25706." evidence="7" ref="1">
    <original>H</original>
    <variation>Q</variation>
    <location>
        <position position="439"/>
    </location>
</feature>
<gene>
    <name type="primary">htra1</name>
    <name type="synonym">htra</name>
    <name type="synonym">prss11</name>
</gene>
<comment type="function">
    <text evidence="1">Serine protease with a variety of targets, including extracellular matrix proteins and proteoglycans such as biglycan, syndecan-4 and glypican-4. Through cleavage of proteoglycans, may release soluble FGF-glycosaminoglycan complexes that promote the range and intensity of FGF signals in the extracellular space. Consequently, facilitates inductive processes in the developing embryo, such as posteriorization, mesoderm induction and neuronal differentiation. Regulates the availability of insulin-like growth factors (IGFs) by cleaving IGF-binding proteins. Inhibits signaling mediated by TGF-beta family members. Consequently, may regulate many physiological processes. Intracellularly, degrades TSC2, leading to the activation of TSC2 downstream targets (By similarity).</text>
</comment>
<comment type="subunit">
    <text evidence="1">Forms homotrimers. In the presence of substrate, may form higher-order multimers in a PDZ-independent manner.</text>
</comment>
<comment type="subcellular location">
    <subcellularLocation>
        <location evidence="2">Cell membrane</location>
    </subcellularLocation>
    <subcellularLocation>
        <location evidence="2">Secreted</location>
    </subcellularLocation>
    <subcellularLocation>
        <location evidence="2">Cytoplasm</location>
        <location evidence="2">Cytosol</location>
    </subcellularLocation>
    <text evidence="2">Predominantly secreted. Also found associated with the plasma membrane.</text>
</comment>
<comment type="similarity">
    <text evidence="7">Belongs to the peptidase S1C family.</text>
</comment>
<comment type="sequence caution" evidence="7">
    <conflict type="erroneous initiation">
        <sequence resource="EMBL-CDS" id="AAI25706"/>
    </conflict>
    <text>Truncated N-terminus.</text>
</comment>
<comment type="sequence caution" evidence="7">
    <conflict type="erroneous initiation">
        <sequence resource="EMBL-CDS" id="AAI35435"/>
    </conflict>
    <text>Truncated N-terminus.</text>
</comment>
<sequence>MAMLWLAVLLTCGAPAALLPTSGVGCPSRCDPASCAPAPTNCPAGETALRCGCCPVCAAAEWERCGEGPEDPLCASGLRCVKNGGVARCQCPSNLPVCGSDGKTYPSLCRLQAESKAAQGKGSAAIIPIQRGDCQQGQRDPDSPRYKYNFIADVVEKIAPAVVHIELFRMLPFFKREVPAASGSGFIVSEDGLILTNAHVVTNKHRLKVERSDGSTYDAQIIDVDEKADIALIKIKAKGKLPVLLLGRSEDLRPGEFVVAIGSPFSLQNTVTTGIVSTAQRGGKELGLRNSDMDYIQTDAIINYGNSGGPLVNLDGEVIGINTLKVTAGISFAIPSDKIRKFLAESHNRQSTGQGTKKKKYLGIRMMSLSQGKLKELKEQVKDFPENTSGAYIVEVIPDTPAEEAGLKEGDIIISIGGKSVTSSSDVSDAIKKEGTTLHLVIRRGNEDIPISVTPKEIEF</sequence>
<reference key="1">
    <citation type="journal article" date="2010" name="Science">
        <title>The genome of the Western clawed frog Xenopus tropicalis.</title>
        <authorList>
            <person name="Hellsten U."/>
            <person name="Harland R.M."/>
            <person name="Gilchrist M.J."/>
            <person name="Hendrix D."/>
            <person name="Jurka J."/>
            <person name="Kapitonov V."/>
            <person name="Ovcharenko I."/>
            <person name="Putnam N.H."/>
            <person name="Shu S."/>
            <person name="Taher L."/>
            <person name="Blitz I.L."/>
            <person name="Blumberg B."/>
            <person name="Dichmann D.S."/>
            <person name="Dubchak I."/>
            <person name="Amaya E."/>
            <person name="Detter J.C."/>
            <person name="Fletcher R."/>
            <person name="Gerhard D.S."/>
            <person name="Goodstein D."/>
            <person name="Graves T."/>
            <person name="Grigoriev I.V."/>
            <person name="Grimwood J."/>
            <person name="Kawashima T."/>
            <person name="Lindquist E."/>
            <person name="Lucas S.M."/>
            <person name="Mead P.E."/>
            <person name="Mitros T."/>
            <person name="Ogino H."/>
            <person name="Ohta Y."/>
            <person name="Poliakov A.V."/>
            <person name="Pollet N."/>
            <person name="Robert J."/>
            <person name="Salamov A."/>
            <person name="Sater A.K."/>
            <person name="Schmutz J."/>
            <person name="Terry A."/>
            <person name="Vize P.D."/>
            <person name="Warren W.C."/>
            <person name="Wells D."/>
            <person name="Wills A."/>
            <person name="Wilson R.K."/>
            <person name="Zimmerman L.B."/>
            <person name="Zorn A.M."/>
            <person name="Grainger R."/>
            <person name="Grammer T."/>
            <person name="Khokha M.K."/>
            <person name="Richardson P.M."/>
            <person name="Rokhsar D.S."/>
        </authorList>
    </citation>
    <scope>NUCLEOTIDE SEQUENCE [LARGE SCALE GENOMIC DNA]</scope>
</reference>
<reference key="2">
    <citation type="submission" date="2007-03" db="EMBL/GenBank/DDBJ databases">
        <authorList>
            <consortium name="NIH - Xenopus Gene Collection (XGC) project"/>
        </authorList>
    </citation>
    <scope>NUCLEOTIDE SEQUENCE [LARGE SCALE MRNA]</scope>
    <source>
        <tissue>Embryo</tissue>
    </source>
</reference>
<proteinExistence type="evidence at transcript level"/>